<gene>
    <name type="primary">mt:ND4</name>
    <name type="synonym">ND4</name>
    <name type="ORF">CG34085</name>
</gene>
<feature type="chain" id="PRO_0000117930" description="NADH-ubiquinone oxidoreductase chain 4">
    <location>
        <begin position="1"/>
        <end position="446"/>
    </location>
</feature>
<feature type="transmembrane region" description="Helical" evidence="2">
    <location>
        <begin position="4"/>
        <end position="24"/>
    </location>
</feature>
<feature type="transmembrane region" description="Helical" evidence="2">
    <location>
        <begin position="56"/>
        <end position="76"/>
    </location>
</feature>
<feature type="transmembrane region" description="Helical" evidence="2">
    <location>
        <begin position="93"/>
        <end position="113"/>
    </location>
</feature>
<feature type="transmembrane region" description="Helical" evidence="2">
    <location>
        <begin position="114"/>
        <end position="134"/>
    </location>
</feature>
<feature type="transmembrane region" description="Helical" evidence="2">
    <location>
        <begin position="139"/>
        <end position="159"/>
    </location>
</feature>
<feature type="transmembrane region" description="Helical" evidence="2">
    <location>
        <begin position="182"/>
        <end position="202"/>
    </location>
</feature>
<feature type="transmembrane region" description="Helical" evidence="2">
    <location>
        <begin position="218"/>
        <end position="238"/>
    </location>
</feature>
<feature type="transmembrane region" description="Helical" evidence="2">
    <location>
        <begin position="245"/>
        <end position="265"/>
    </location>
</feature>
<feature type="transmembrane region" description="Helical" evidence="2">
    <location>
        <begin position="272"/>
        <end position="292"/>
    </location>
</feature>
<feature type="transmembrane region" description="Helical" evidence="2">
    <location>
        <begin position="297"/>
        <end position="317"/>
    </location>
</feature>
<feature type="transmembrane region" description="Helical" evidence="2">
    <location>
        <begin position="330"/>
        <end position="350"/>
    </location>
</feature>
<feature type="transmembrane region" description="Helical" evidence="2">
    <location>
        <begin position="373"/>
        <end position="393"/>
    </location>
</feature>
<feature type="transmembrane region" description="Helical" evidence="2">
    <location>
        <begin position="426"/>
        <end position="446"/>
    </location>
</feature>
<feature type="sequence conflict" description="In Ref. 1; AAA69711." evidence="3" ref="1">
    <original>Y</original>
    <variation>L</variation>
    <location>
        <position position="160"/>
    </location>
</feature>
<feature type="sequence conflict" description="In Ref. 2; AAC47819." evidence="3" ref="2">
    <original>L</original>
    <variation>V</variation>
    <location>
        <position position="161"/>
    </location>
</feature>
<feature type="sequence conflict" description="In Ref. 1; AAA69711." evidence="3" ref="1">
    <original>LV</original>
    <variation>FS</variation>
    <location>
        <begin position="199"/>
        <end position="200"/>
    </location>
</feature>
<feature type="sequence conflict" description="In Ref. 1; AAA69711 and 2; AAC47819." evidence="3" ref="1 2">
    <original>H</original>
    <variation>Y</variation>
    <location>
        <position position="201"/>
    </location>
</feature>
<feature type="sequence conflict" description="In Ref. 1; AAA69711 and 2; AAC47819." evidence="3" ref="1 2">
    <original>Y</original>
    <variation>S</variation>
    <location>
        <position position="368"/>
    </location>
</feature>
<feature type="helix" evidence="4">
    <location>
        <begin position="2"/>
        <end position="10"/>
    </location>
</feature>
<feature type="helix" evidence="4">
    <location>
        <begin position="11"/>
        <end position="15"/>
    </location>
</feature>
<feature type="strand" evidence="4">
    <location>
        <begin position="17"/>
        <end position="19"/>
    </location>
</feature>
<feature type="helix" evidence="4">
    <location>
        <begin position="21"/>
        <end position="37"/>
    </location>
</feature>
<feature type="strand" evidence="4">
    <location>
        <begin position="46"/>
        <end position="49"/>
    </location>
</feature>
<feature type="strand" evidence="4">
    <location>
        <begin position="52"/>
        <end position="54"/>
    </location>
</feature>
<feature type="helix" evidence="4">
    <location>
        <begin position="56"/>
        <end position="75"/>
    </location>
</feature>
<feature type="helix" evidence="4">
    <location>
        <begin position="78"/>
        <end position="81"/>
    </location>
</feature>
<feature type="helix" evidence="4">
    <location>
        <begin position="86"/>
        <end position="105"/>
    </location>
</feature>
<feature type="helix" evidence="4">
    <location>
        <begin position="109"/>
        <end position="118"/>
    </location>
</feature>
<feature type="helix" evidence="4">
    <location>
        <begin position="120"/>
        <end position="130"/>
    </location>
</feature>
<feature type="helix" evidence="4">
    <location>
        <begin position="136"/>
        <end position="165"/>
    </location>
</feature>
<feature type="helix" evidence="4">
    <location>
        <begin position="170"/>
        <end position="173"/>
    </location>
</feature>
<feature type="helix" evidence="4">
    <location>
        <begin position="181"/>
        <end position="185"/>
    </location>
</feature>
<feature type="helix" evidence="4">
    <location>
        <begin position="189"/>
        <end position="194"/>
    </location>
</feature>
<feature type="helix" evidence="4">
    <location>
        <begin position="198"/>
        <end position="200"/>
    </location>
</feature>
<feature type="helix" evidence="4">
    <location>
        <begin position="204"/>
        <end position="210"/>
    </location>
</feature>
<feature type="helix" evidence="4">
    <location>
        <begin position="213"/>
        <end position="221"/>
    </location>
</feature>
<feature type="helix" evidence="4">
    <location>
        <begin position="223"/>
        <end position="234"/>
    </location>
</feature>
<feature type="helix" evidence="4">
    <location>
        <begin position="239"/>
        <end position="265"/>
    </location>
</feature>
<feature type="helix" evidence="4">
    <location>
        <begin position="270"/>
        <end position="291"/>
    </location>
</feature>
<feature type="helix" evidence="4">
    <location>
        <begin position="294"/>
        <end position="325"/>
    </location>
</feature>
<feature type="turn" evidence="4">
    <location>
        <begin position="330"/>
        <end position="332"/>
    </location>
</feature>
<feature type="helix" evidence="4">
    <location>
        <begin position="336"/>
        <end position="338"/>
    </location>
</feature>
<feature type="helix" evidence="4">
    <location>
        <begin position="341"/>
        <end position="354"/>
    </location>
</feature>
<feature type="helix" evidence="4">
    <location>
        <begin position="361"/>
        <end position="376"/>
    </location>
</feature>
<feature type="helix" evidence="4">
    <location>
        <begin position="378"/>
        <end position="380"/>
    </location>
</feature>
<feature type="helix" evidence="4">
    <location>
        <begin position="381"/>
        <end position="403"/>
    </location>
</feature>
<feature type="strand" evidence="4">
    <location>
        <begin position="409"/>
        <end position="412"/>
    </location>
</feature>
<feature type="helix" evidence="4">
    <location>
        <begin position="419"/>
        <end position="434"/>
    </location>
</feature>
<feature type="helix" evidence="4">
    <location>
        <begin position="435"/>
        <end position="438"/>
    </location>
</feature>
<feature type="helix" evidence="4">
    <location>
        <begin position="439"/>
        <end position="443"/>
    </location>
</feature>
<sequence length="446" mass="51448">MLKIIFFLLFLIPFCFINNMYWMVQIMMFFISFIFLLMNNFMNYWSEISYFLGCDMLSYGLILLSLWICSLMLLASEMINKHNNYKNLFLLNIIILLLLLILTFSSMSLFMFYLFFESSLIPTLFLILGWGYQPERLQAGLYLLFYTLLVSLPMLIGIFYLMNKIGSMNFYLMNNFMFNYDLLYFCLLCAFLVKMPMFLVHLWLPKAHVEAPVSGSMILAGIMLKLGGYGMLRVISFLQLMNLKYSFVWISISLVGGVLVSLVCLRQTDLKALIAYSSVAHMGIVLSGLLTMTYWGLCGSYTLMIAHGLCSSGLFCLANVSYERLGSRSMLINKGLLNFMPSMTLWWFLLSSANMAAPPTLNLLGEIYLLNSIVSWSWISMILLSFLSFFSAAYTLYLYSFSQHGKLFSGVYSFSSGKIREYLLMLLHWLPLNLLILKSESFMLWL</sequence>
<proteinExistence type="evidence at protein level"/>
<accession>P18931</accession>
<name>NU4M_DROME</name>
<dbReference type="EC" id="7.1.1.2"/>
<dbReference type="EMBL" id="M37275">
    <property type="protein sequence ID" value="AAA69711.1"/>
    <property type="status" value="ALT_TERM"/>
    <property type="molecule type" value="Genomic_DNA"/>
</dbReference>
<dbReference type="EMBL" id="U37541">
    <property type="protein sequence ID" value="AAC47819.1"/>
    <property type="molecule type" value="Genomic_DNA"/>
</dbReference>
<dbReference type="EMBL" id="KJ947872">
    <property type="protein sequence ID" value="AIC64012.1"/>
    <property type="molecule type" value="Genomic_DNA"/>
</dbReference>
<dbReference type="RefSeq" id="YP_009047274.1">
    <property type="nucleotide sequence ID" value="NC_024511.2"/>
</dbReference>
<dbReference type="PDB" id="8B9Z">
    <property type="method" value="EM"/>
    <property type="resolution" value="3.28 A"/>
    <property type="chains" value="M=1-446"/>
</dbReference>
<dbReference type="PDB" id="8BA0">
    <property type="method" value="EM"/>
    <property type="resolution" value="3.68 A"/>
    <property type="chains" value="M=1-446"/>
</dbReference>
<dbReference type="PDBsum" id="8B9Z"/>
<dbReference type="PDBsum" id="8BA0"/>
<dbReference type="EMDB" id="EMD-15936"/>
<dbReference type="EMDB" id="EMD-15937"/>
<dbReference type="SMR" id="P18931"/>
<dbReference type="ComplexPortal" id="CPX-8628">
    <property type="entry name" value="Mitochondrial respiratory chain complex I"/>
</dbReference>
<dbReference type="ComplexPortal" id="CPX-8638">
    <property type="entry name" value="Mitochondrial respiratory chain complex I, testis-specific variant"/>
</dbReference>
<dbReference type="FunCoup" id="P18931">
    <property type="interactions" value="149"/>
</dbReference>
<dbReference type="STRING" id="7227.FBpp0390632"/>
<dbReference type="PaxDb" id="7227-FBpp0100183"/>
<dbReference type="EnsemblMetazoa" id="FBtr0433500">
    <property type="protein sequence ID" value="FBpp0390632"/>
    <property type="gene ID" value="FBgn0262952"/>
</dbReference>
<dbReference type="GeneID" id="19893551"/>
<dbReference type="KEGG" id="dme:Dmel_CG34085"/>
<dbReference type="AGR" id="FB:FBgn0262952"/>
<dbReference type="CTD" id="4538"/>
<dbReference type="FlyBase" id="FBgn0262952">
    <property type="gene designation" value="mt:ND4"/>
</dbReference>
<dbReference type="VEuPathDB" id="VectorBase:FBgn0262952"/>
<dbReference type="eggNOG" id="KOG4845">
    <property type="taxonomic scope" value="Eukaryota"/>
</dbReference>
<dbReference type="GeneTree" id="ENSGT00730000111316"/>
<dbReference type="HOGENOM" id="CLU_007100_4_0_1"/>
<dbReference type="InParanoid" id="P18931"/>
<dbReference type="OMA" id="ITRWGNQ"/>
<dbReference type="OrthoDB" id="564260at2759"/>
<dbReference type="PhylomeDB" id="P18931"/>
<dbReference type="Reactome" id="R-DME-611105">
    <property type="pathway name" value="Respiratory electron transport"/>
</dbReference>
<dbReference type="Reactome" id="R-DME-6799198">
    <property type="pathway name" value="Complex I biogenesis"/>
</dbReference>
<dbReference type="GenomeRNAi" id="19893551"/>
<dbReference type="PRO" id="PR:P18931"/>
<dbReference type="Proteomes" id="UP000000803">
    <property type="component" value="Mitochondrion"/>
</dbReference>
<dbReference type="Bgee" id="FBgn0262952">
    <property type="expression patterns" value="Expressed in adult class III enteroendocrine cell in adult midgut (Drosophila) and 258 other cell types or tissues"/>
</dbReference>
<dbReference type="ExpressionAtlas" id="P18931">
    <property type="expression patterns" value="baseline and differential"/>
</dbReference>
<dbReference type="GO" id="GO:0005743">
    <property type="term" value="C:mitochondrial inner membrane"/>
    <property type="evidence" value="ECO:0000305"/>
    <property type="project" value="FlyBase"/>
</dbReference>
<dbReference type="GO" id="GO:0045271">
    <property type="term" value="C:respiratory chain complex I"/>
    <property type="evidence" value="ECO:0000314"/>
    <property type="project" value="FlyBase"/>
</dbReference>
<dbReference type="GO" id="GO:0008137">
    <property type="term" value="F:NADH dehydrogenase (ubiquinone) activity"/>
    <property type="evidence" value="ECO:0007669"/>
    <property type="project" value="UniProtKB-EC"/>
</dbReference>
<dbReference type="GO" id="GO:0048039">
    <property type="term" value="F:ubiquinone binding"/>
    <property type="evidence" value="ECO:0000318"/>
    <property type="project" value="GO_Central"/>
</dbReference>
<dbReference type="GO" id="GO:0009060">
    <property type="term" value="P:aerobic respiration"/>
    <property type="evidence" value="ECO:0000318"/>
    <property type="project" value="GO_Central"/>
</dbReference>
<dbReference type="GO" id="GO:0015990">
    <property type="term" value="P:electron transport coupled proton transport"/>
    <property type="evidence" value="ECO:0000318"/>
    <property type="project" value="GO_Central"/>
</dbReference>
<dbReference type="GO" id="GO:0006120">
    <property type="term" value="P:mitochondrial electron transport, NADH to ubiquinone"/>
    <property type="evidence" value="ECO:0000305"/>
    <property type="project" value="FlyBase"/>
</dbReference>
<dbReference type="InterPro" id="IPR000260">
    <property type="entry name" value="NADH4_N"/>
</dbReference>
<dbReference type="InterPro" id="IPR003918">
    <property type="entry name" value="NADH_UbQ_OxRdtase"/>
</dbReference>
<dbReference type="InterPro" id="IPR001750">
    <property type="entry name" value="ND/Mrp_TM"/>
</dbReference>
<dbReference type="PANTHER" id="PTHR43507">
    <property type="entry name" value="NADH-UBIQUINONE OXIDOREDUCTASE CHAIN 4"/>
    <property type="match status" value="1"/>
</dbReference>
<dbReference type="PANTHER" id="PTHR43507:SF20">
    <property type="entry name" value="NADH-UBIQUINONE OXIDOREDUCTASE CHAIN 4"/>
    <property type="match status" value="1"/>
</dbReference>
<dbReference type="Pfam" id="PF01059">
    <property type="entry name" value="Oxidored_q5_N"/>
    <property type="match status" value="1"/>
</dbReference>
<dbReference type="Pfam" id="PF00361">
    <property type="entry name" value="Proton_antipo_M"/>
    <property type="match status" value="1"/>
</dbReference>
<dbReference type="PRINTS" id="PR01437">
    <property type="entry name" value="NUOXDRDTASE4"/>
</dbReference>
<geneLocation type="mitochondrion"/>
<comment type="function">
    <text evidence="1">Core subunit of the mitochondrial membrane respiratory chain NADH dehydrogenase (Complex I) that is believed to belong to the minimal assembly required for catalysis. Complex I functions in the transfer of electrons from NADH to the respiratory chain. The immediate electron acceptor for the enzyme is believed to be ubiquinone (By similarity).</text>
</comment>
<comment type="catalytic activity">
    <reaction>
        <text>a ubiquinone + NADH + 5 H(+)(in) = a ubiquinol + NAD(+) + 4 H(+)(out)</text>
        <dbReference type="Rhea" id="RHEA:29091"/>
        <dbReference type="Rhea" id="RHEA-COMP:9565"/>
        <dbReference type="Rhea" id="RHEA-COMP:9566"/>
        <dbReference type="ChEBI" id="CHEBI:15378"/>
        <dbReference type="ChEBI" id="CHEBI:16389"/>
        <dbReference type="ChEBI" id="CHEBI:17976"/>
        <dbReference type="ChEBI" id="CHEBI:57540"/>
        <dbReference type="ChEBI" id="CHEBI:57945"/>
        <dbReference type="EC" id="7.1.1.2"/>
    </reaction>
</comment>
<comment type="subcellular location">
    <subcellularLocation>
        <location evidence="1">Mitochondrion membrane</location>
        <topology evidence="1">Multi-pass membrane protein</topology>
    </subcellularLocation>
</comment>
<comment type="similarity">
    <text evidence="3">Belongs to the complex I subunit 4 family.</text>
</comment>
<organism>
    <name type="scientific">Drosophila melanogaster</name>
    <name type="common">Fruit fly</name>
    <dbReference type="NCBI Taxonomy" id="7227"/>
    <lineage>
        <taxon>Eukaryota</taxon>
        <taxon>Metazoa</taxon>
        <taxon>Ecdysozoa</taxon>
        <taxon>Arthropoda</taxon>
        <taxon>Hexapoda</taxon>
        <taxon>Insecta</taxon>
        <taxon>Pterygota</taxon>
        <taxon>Neoptera</taxon>
        <taxon>Endopterygota</taxon>
        <taxon>Diptera</taxon>
        <taxon>Brachycera</taxon>
        <taxon>Muscomorpha</taxon>
        <taxon>Ephydroidea</taxon>
        <taxon>Drosophilidae</taxon>
        <taxon>Drosophila</taxon>
        <taxon>Sophophora</taxon>
    </lineage>
</organism>
<protein>
    <recommendedName>
        <fullName>NADH-ubiquinone oxidoreductase chain 4</fullName>
        <ecNumber>7.1.1.2</ecNumber>
    </recommendedName>
    <alternativeName>
        <fullName>NADH dehydrogenase subunit 4</fullName>
    </alternativeName>
</protein>
<keyword id="KW-0002">3D-structure</keyword>
<keyword id="KW-0249">Electron transport</keyword>
<keyword id="KW-0472">Membrane</keyword>
<keyword id="KW-0496">Mitochondrion</keyword>
<keyword id="KW-0520">NAD</keyword>
<keyword id="KW-1185">Reference proteome</keyword>
<keyword id="KW-0679">Respiratory chain</keyword>
<keyword id="KW-1278">Translocase</keyword>
<keyword id="KW-0812">Transmembrane</keyword>
<keyword id="KW-1133">Transmembrane helix</keyword>
<keyword id="KW-0813">Transport</keyword>
<keyword id="KW-0830">Ubiquinone</keyword>
<reference key="1">
    <citation type="journal article" date="1988" name="Genetics">
        <title>Drosophila melanogaster mitochondrial DNA: gene organization and evolutionary considerations.</title>
        <authorList>
            <person name="Garesse R."/>
        </authorList>
    </citation>
    <scope>NUCLEOTIDE SEQUENCE [GENOMIC DNA]</scope>
    <source>
        <strain>Bretagne</strain>
    </source>
</reference>
<reference key="2">
    <citation type="journal article" date="1995" name="Insect Mol. Biol.">
        <title>Drosophila melanogaster mitochondrial DNA: completion of the nucleotide sequence and evolutionary comparisons.</title>
        <authorList>
            <person name="Lewis D.L."/>
            <person name="Farr C.L."/>
            <person name="Kaguni L.S."/>
        </authorList>
    </citation>
    <scope>NUCLEOTIDE SEQUENCE [LARGE SCALE GENOMIC DNA]</scope>
</reference>
<reference key="3">
    <citation type="submission" date="2014-08" db="EMBL/GenBank/DDBJ databases">
        <authorList>
            <person name="Wan K."/>
            <person name="Celniker S."/>
        </authorList>
    </citation>
    <scope>NUCLEOTIDE SEQUENCE [LARGE SCALE GENOMIC DNA]</scope>
    <source>
        <strain>Berkeley</strain>
    </source>
</reference>
<evidence type="ECO:0000250" key="1"/>
<evidence type="ECO:0000255" key="2"/>
<evidence type="ECO:0000305" key="3"/>
<evidence type="ECO:0007829" key="4">
    <source>
        <dbReference type="PDB" id="8B9Z"/>
    </source>
</evidence>